<protein>
    <recommendedName>
        <fullName evidence="1">CTP synthase</fullName>
        <ecNumber evidence="1">6.3.4.2</ecNumber>
    </recommendedName>
    <alternativeName>
        <fullName evidence="1">Cytidine 5'-triphosphate synthase</fullName>
    </alternativeName>
    <alternativeName>
        <fullName evidence="1">Cytidine triphosphate synthetase</fullName>
        <shortName evidence="1">CTP synthetase</shortName>
        <shortName evidence="1">CTPS</shortName>
    </alternativeName>
    <alternativeName>
        <fullName evidence="1">UTP--ammonia ligase</fullName>
    </alternativeName>
</protein>
<organism>
    <name type="scientific">Chloroherpeton thalassium (strain ATCC 35110 / GB-78)</name>
    <dbReference type="NCBI Taxonomy" id="517418"/>
    <lineage>
        <taxon>Bacteria</taxon>
        <taxon>Pseudomonadati</taxon>
        <taxon>Chlorobiota</taxon>
        <taxon>Chlorobiia</taxon>
        <taxon>Chlorobiales</taxon>
        <taxon>Chloroherpetonaceae</taxon>
        <taxon>Chloroherpeton</taxon>
    </lineage>
</organism>
<keyword id="KW-0067">ATP-binding</keyword>
<keyword id="KW-0315">Glutamine amidotransferase</keyword>
<keyword id="KW-0436">Ligase</keyword>
<keyword id="KW-0460">Magnesium</keyword>
<keyword id="KW-0479">Metal-binding</keyword>
<keyword id="KW-0547">Nucleotide-binding</keyword>
<keyword id="KW-0665">Pyrimidine biosynthesis</keyword>
<keyword id="KW-1185">Reference proteome</keyword>
<accession>B3QWC0</accession>
<gene>
    <name evidence="1" type="primary">pyrG</name>
    <name type="ordered locus">Ctha_0764</name>
</gene>
<proteinExistence type="inferred from homology"/>
<comment type="function">
    <text evidence="1">Catalyzes the ATP-dependent amination of UTP to CTP with either L-glutamine or ammonia as the source of nitrogen. Regulates intracellular CTP levels through interactions with the four ribonucleotide triphosphates.</text>
</comment>
<comment type="catalytic activity">
    <reaction evidence="1">
        <text>UTP + L-glutamine + ATP + H2O = CTP + L-glutamate + ADP + phosphate + 2 H(+)</text>
        <dbReference type="Rhea" id="RHEA:26426"/>
        <dbReference type="ChEBI" id="CHEBI:15377"/>
        <dbReference type="ChEBI" id="CHEBI:15378"/>
        <dbReference type="ChEBI" id="CHEBI:29985"/>
        <dbReference type="ChEBI" id="CHEBI:30616"/>
        <dbReference type="ChEBI" id="CHEBI:37563"/>
        <dbReference type="ChEBI" id="CHEBI:43474"/>
        <dbReference type="ChEBI" id="CHEBI:46398"/>
        <dbReference type="ChEBI" id="CHEBI:58359"/>
        <dbReference type="ChEBI" id="CHEBI:456216"/>
        <dbReference type="EC" id="6.3.4.2"/>
    </reaction>
</comment>
<comment type="catalytic activity">
    <reaction evidence="1">
        <text>L-glutamine + H2O = L-glutamate + NH4(+)</text>
        <dbReference type="Rhea" id="RHEA:15889"/>
        <dbReference type="ChEBI" id="CHEBI:15377"/>
        <dbReference type="ChEBI" id="CHEBI:28938"/>
        <dbReference type="ChEBI" id="CHEBI:29985"/>
        <dbReference type="ChEBI" id="CHEBI:58359"/>
    </reaction>
</comment>
<comment type="catalytic activity">
    <reaction evidence="1">
        <text>UTP + NH4(+) + ATP = CTP + ADP + phosphate + 2 H(+)</text>
        <dbReference type="Rhea" id="RHEA:16597"/>
        <dbReference type="ChEBI" id="CHEBI:15378"/>
        <dbReference type="ChEBI" id="CHEBI:28938"/>
        <dbReference type="ChEBI" id="CHEBI:30616"/>
        <dbReference type="ChEBI" id="CHEBI:37563"/>
        <dbReference type="ChEBI" id="CHEBI:43474"/>
        <dbReference type="ChEBI" id="CHEBI:46398"/>
        <dbReference type="ChEBI" id="CHEBI:456216"/>
    </reaction>
</comment>
<comment type="activity regulation">
    <text evidence="1">Allosterically activated by GTP, when glutamine is the substrate; GTP has no effect on the reaction when ammonia is the substrate. The allosteric effector GTP functions by stabilizing the protein conformation that binds the tetrahedral intermediate(s) formed during glutamine hydrolysis. Inhibited by the product CTP, via allosteric rather than competitive inhibition.</text>
</comment>
<comment type="pathway">
    <text evidence="1">Pyrimidine metabolism; CTP biosynthesis via de novo pathway; CTP from UDP: step 2/2.</text>
</comment>
<comment type="subunit">
    <text evidence="1">Homotetramer.</text>
</comment>
<comment type="miscellaneous">
    <text evidence="1">CTPSs have evolved a hybrid strategy for distinguishing between UTP and CTP. The overlapping regions of the product feedback inhibitory and substrate sites recognize a common feature in both compounds, the triphosphate moiety. To differentiate isosteric substrate and product pyrimidine rings, an additional pocket far from the expected kinase/ligase catalytic site, specifically recognizes the cytosine and ribose portions of the product inhibitor.</text>
</comment>
<comment type="similarity">
    <text evidence="1">Belongs to the CTP synthase family.</text>
</comment>
<name>PYRG_CHLT3</name>
<feature type="chain" id="PRO_1000139419" description="CTP synthase">
    <location>
        <begin position="1"/>
        <end position="557"/>
    </location>
</feature>
<feature type="domain" description="Glutamine amidotransferase type-1" evidence="1">
    <location>
        <begin position="299"/>
        <end position="543"/>
    </location>
</feature>
<feature type="region of interest" description="Amidoligase domain" evidence="1">
    <location>
        <begin position="1"/>
        <end position="272"/>
    </location>
</feature>
<feature type="active site" description="Nucleophile; for glutamine hydrolysis" evidence="1">
    <location>
        <position position="390"/>
    </location>
</feature>
<feature type="active site" evidence="1">
    <location>
        <position position="516"/>
    </location>
</feature>
<feature type="active site" evidence="1">
    <location>
        <position position="518"/>
    </location>
</feature>
<feature type="binding site" evidence="1">
    <location>
        <position position="18"/>
    </location>
    <ligand>
        <name>CTP</name>
        <dbReference type="ChEBI" id="CHEBI:37563"/>
        <note>allosteric inhibitor</note>
    </ligand>
</feature>
<feature type="binding site" evidence="1">
    <location>
        <position position="18"/>
    </location>
    <ligand>
        <name>UTP</name>
        <dbReference type="ChEBI" id="CHEBI:46398"/>
    </ligand>
</feature>
<feature type="binding site" evidence="1">
    <location>
        <begin position="19"/>
        <end position="24"/>
    </location>
    <ligand>
        <name>ATP</name>
        <dbReference type="ChEBI" id="CHEBI:30616"/>
    </ligand>
</feature>
<feature type="binding site" evidence="1">
    <location>
        <position position="59"/>
    </location>
    <ligand>
        <name>L-glutamine</name>
        <dbReference type="ChEBI" id="CHEBI:58359"/>
    </ligand>
</feature>
<feature type="binding site" evidence="1">
    <location>
        <position position="76"/>
    </location>
    <ligand>
        <name>ATP</name>
        <dbReference type="ChEBI" id="CHEBI:30616"/>
    </ligand>
</feature>
<feature type="binding site" evidence="1">
    <location>
        <position position="76"/>
    </location>
    <ligand>
        <name>Mg(2+)</name>
        <dbReference type="ChEBI" id="CHEBI:18420"/>
    </ligand>
</feature>
<feature type="binding site" evidence="1">
    <location>
        <position position="146"/>
    </location>
    <ligand>
        <name>Mg(2+)</name>
        <dbReference type="ChEBI" id="CHEBI:18420"/>
    </ligand>
</feature>
<feature type="binding site" evidence="1">
    <location>
        <begin position="153"/>
        <end position="155"/>
    </location>
    <ligand>
        <name>CTP</name>
        <dbReference type="ChEBI" id="CHEBI:37563"/>
        <note>allosteric inhibitor</note>
    </ligand>
</feature>
<feature type="binding site" evidence="1">
    <location>
        <begin position="193"/>
        <end position="198"/>
    </location>
    <ligand>
        <name>CTP</name>
        <dbReference type="ChEBI" id="CHEBI:37563"/>
        <note>allosteric inhibitor</note>
    </ligand>
</feature>
<feature type="binding site" evidence="1">
    <location>
        <begin position="193"/>
        <end position="198"/>
    </location>
    <ligand>
        <name>UTP</name>
        <dbReference type="ChEBI" id="CHEBI:46398"/>
    </ligand>
</feature>
<feature type="binding site" evidence="1">
    <location>
        <position position="229"/>
    </location>
    <ligand>
        <name>CTP</name>
        <dbReference type="ChEBI" id="CHEBI:37563"/>
        <note>allosteric inhibitor</note>
    </ligand>
</feature>
<feature type="binding site" evidence="1">
    <location>
        <position position="229"/>
    </location>
    <ligand>
        <name>UTP</name>
        <dbReference type="ChEBI" id="CHEBI:46398"/>
    </ligand>
</feature>
<feature type="binding site" evidence="1">
    <location>
        <position position="363"/>
    </location>
    <ligand>
        <name>L-glutamine</name>
        <dbReference type="ChEBI" id="CHEBI:58359"/>
    </ligand>
</feature>
<feature type="binding site" evidence="1">
    <location>
        <begin position="391"/>
        <end position="394"/>
    </location>
    <ligand>
        <name>L-glutamine</name>
        <dbReference type="ChEBI" id="CHEBI:58359"/>
    </ligand>
</feature>
<feature type="binding site" evidence="1">
    <location>
        <position position="414"/>
    </location>
    <ligand>
        <name>L-glutamine</name>
        <dbReference type="ChEBI" id="CHEBI:58359"/>
    </ligand>
</feature>
<feature type="binding site" evidence="1">
    <location>
        <position position="471"/>
    </location>
    <ligand>
        <name>L-glutamine</name>
        <dbReference type="ChEBI" id="CHEBI:58359"/>
    </ligand>
</feature>
<dbReference type="EC" id="6.3.4.2" evidence="1"/>
<dbReference type="EMBL" id="CP001100">
    <property type="protein sequence ID" value="ACF13233.1"/>
    <property type="molecule type" value="Genomic_DNA"/>
</dbReference>
<dbReference type="RefSeq" id="WP_012499317.1">
    <property type="nucleotide sequence ID" value="NC_011026.1"/>
</dbReference>
<dbReference type="SMR" id="B3QWC0"/>
<dbReference type="STRING" id="517418.Ctha_0764"/>
<dbReference type="MEROPS" id="C26.964"/>
<dbReference type="KEGG" id="cts:Ctha_0764"/>
<dbReference type="eggNOG" id="COG0504">
    <property type="taxonomic scope" value="Bacteria"/>
</dbReference>
<dbReference type="HOGENOM" id="CLU_011675_5_0_10"/>
<dbReference type="OrthoDB" id="9801107at2"/>
<dbReference type="UniPathway" id="UPA00159">
    <property type="reaction ID" value="UER00277"/>
</dbReference>
<dbReference type="Proteomes" id="UP000001208">
    <property type="component" value="Chromosome"/>
</dbReference>
<dbReference type="GO" id="GO:0005829">
    <property type="term" value="C:cytosol"/>
    <property type="evidence" value="ECO:0007669"/>
    <property type="project" value="TreeGrafter"/>
</dbReference>
<dbReference type="GO" id="GO:0005524">
    <property type="term" value="F:ATP binding"/>
    <property type="evidence" value="ECO:0007669"/>
    <property type="project" value="UniProtKB-KW"/>
</dbReference>
<dbReference type="GO" id="GO:0003883">
    <property type="term" value="F:CTP synthase activity"/>
    <property type="evidence" value="ECO:0007669"/>
    <property type="project" value="UniProtKB-UniRule"/>
</dbReference>
<dbReference type="GO" id="GO:0004359">
    <property type="term" value="F:glutaminase activity"/>
    <property type="evidence" value="ECO:0007669"/>
    <property type="project" value="RHEA"/>
</dbReference>
<dbReference type="GO" id="GO:0042802">
    <property type="term" value="F:identical protein binding"/>
    <property type="evidence" value="ECO:0007669"/>
    <property type="project" value="TreeGrafter"/>
</dbReference>
<dbReference type="GO" id="GO:0046872">
    <property type="term" value="F:metal ion binding"/>
    <property type="evidence" value="ECO:0007669"/>
    <property type="project" value="UniProtKB-KW"/>
</dbReference>
<dbReference type="GO" id="GO:0044210">
    <property type="term" value="P:'de novo' CTP biosynthetic process"/>
    <property type="evidence" value="ECO:0007669"/>
    <property type="project" value="UniProtKB-UniRule"/>
</dbReference>
<dbReference type="GO" id="GO:0019856">
    <property type="term" value="P:pyrimidine nucleobase biosynthetic process"/>
    <property type="evidence" value="ECO:0007669"/>
    <property type="project" value="TreeGrafter"/>
</dbReference>
<dbReference type="CDD" id="cd03113">
    <property type="entry name" value="CTPS_N"/>
    <property type="match status" value="1"/>
</dbReference>
<dbReference type="CDD" id="cd01746">
    <property type="entry name" value="GATase1_CTP_Synthase"/>
    <property type="match status" value="1"/>
</dbReference>
<dbReference type="FunFam" id="3.40.50.300:FF:000009">
    <property type="entry name" value="CTP synthase"/>
    <property type="match status" value="1"/>
</dbReference>
<dbReference type="FunFam" id="3.40.50.880:FF:000002">
    <property type="entry name" value="CTP synthase"/>
    <property type="match status" value="1"/>
</dbReference>
<dbReference type="Gene3D" id="3.40.50.880">
    <property type="match status" value="1"/>
</dbReference>
<dbReference type="Gene3D" id="3.40.50.300">
    <property type="entry name" value="P-loop containing nucleotide triphosphate hydrolases"/>
    <property type="match status" value="1"/>
</dbReference>
<dbReference type="HAMAP" id="MF_01227">
    <property type="entry name" value="PyrG"/>
    <property type="match status" value="1"/>
</dbReference>
<dbReference type="InterPro" id="IPR029062">
    <property type="entry name" value="Class_I_gatase-like"/>
</dbReference>
<dbReference type="InterPro" id="IPR004468">
    <property type="entry name" value="CTP_synthase"/>
</dbReference>
<dbReference type="InterPro" id="IPR017456">
    <property type="entry name" value="CTP_synthase_N"/>
</dbReference>
<dbReference type="InterPro" id="IPR017926">
    <property type="entry name" value="GATASE"/>
</dbReference>
<dbReference type="InterPro" id="IPR033828">
    <property type="entry name" value="GATase1_CTP_Synthase"/>
</dbReference>
<dbReference type="InterPro" id="IPR027417">
    <property type="entry name" value="P-loop_NTPase"/>
</dbReference>
<dbReference type="NCBIfam" id="NF003792">
    <property type="entry name" value="PRK05380.1"/>
    <property type="match status" value="1"/>
</dbReference>
<dbReference type="NCBIfam" id="TIGR00337">
    <property type="entry name" value="PyrG"/>
    <property type="match status" value="1"/>
</dbReference>
<dbReference type="PANTHER" id="PTHR11550">
    <property type="entry name" value="CTP SYNTHASE"/>
    <property type="match status" value="1"/>
</dbReference>
<dbReference type="PANTHER" id="PTHR11550:SF0">
    <property type="entry name" value="CTP SYNTHASE-RELATED"/>
    <property type="match status" value="1"/>
</dbReference>
<dbReference type="Pfam" id="PF06418">
    <property type="entry name" value="CTP_synth_N"/>
    <property type="match status" value="1"/>
</dbReference>
<dbReference type="Pfam" id="PF00117">
    <property type="entry name" value="GATase"/>
    <property type="match status" value="1"/>
</dbReference>
<dbReference type="SUPFAM" id="SSF52317">
    <property type="entry name" value="Class I glutamine amidotransferase-like"/>
    <property type="match status" value="1"/>
</dbReference>
<dbReference type="SUPFAM" id="SSF52540">
    <property type="entry name" value="P-loop containing nucleoside triphosphate hydrolases"/>
    <property type="match status" value="1"/>
</dbReference>
<dbReference type="PROSITE" id="PS51273">
    <property type="entry name" value="GATASE_TYPE_1"/>
    <property type="match status" value="1"/>
</dbReference>
<reference key="1">
    <citation type="submission" date="2008-06" db="EMBL/GenBank/DDBJ databases">
        <title>Complete sequence of Chloroherpeton thalassium ATCC 35110.</title>
        <authorList>
            <consortium name="US DOE Joint Genome Institute"/>
            <person name="Lucas S."/>
            <person name="Copeland A."/>
            <person name="Lapidus A."/>
            <person name="Glavina del Rio T."/>
            <person name="Dalin E."/>
            <person name="Tice H."/>
            <person name="Bruce D."/>
            <person name="Goodwin L."/>
            <person name="Pitluck S."/>
            <person name="Schmutz J."/>
            <person name="Larimer F."/>
            <person name="Land M."/>
            <person name="Hauser L."/>
            <person name="Kyrpides N."/>
            <person name="Mikhailova N."/>
            <person name="Liu Z."/>
            <person name="Li T."/>
            <person name="Zhao F."/>
            <person name="Overmann J."/>
            <person name="Bryant D.A."/>
            <person name="Richardson P."/>
        </authorList>
    </citation>
    <scope>NUCLEOTIDE SEQUENCE [LARGE SCALE GENOMIC DNA]</scope>
    <source>
        <strain>ATCC 35110 / GB-78</strain>
    </source>
</reference>
<evidence type="ECO:0000255" key="1">
    <source>
        <dbReference type="HAMAP-Rule" id="MF_01227"/>
    </source>
</evidence>
<sequence>MARSKIVKHIFVTGGVVSSLGKGILSASLGALLKSRGLRVAIQKYDPYINVDPGTMSPYQHGEVYVTDDGAETDLDLGHYERFLDEATSRASNMTMGRIYKTVLDNERRGDYLGGTVQVVPHVIDEIKARMLDLAKKGSFDVVITEIGGTVGDIESLPFLEAMRQLKLQLGSKNLVNIHLTLVPYIKSAAELKTKPTQHSVKMLLEIGIQPDILVCRSEHPLSKDIKHKIGLFCNLSDSDVVGLCDAETIYEVPLVLHEEKIDSLVLKKLMLKSPKPADIKDWKDFSGKVKFPKDGVVEIGVCGKYTKYPDAYKSIVESFIHAGAANNVKVKVRWMHSEDLEQKDCKVNEMLQGISGILVAPGFGERGIEGKIEIVKIARERNIPFFGICLGMQCATIEYARNVCGMEGAHSTEFVKKTKYPVIDLMEHQRSVKQKGGTMRLGSYPCILEENTNAFAAYGKNLINERHRHRYEFNNQFKEELSAKGLVIAGASPDGELVEIIELKGHRWFVGVQFHPELKSRVHKPHPLFISFVAEAKKFRDEMAVHHYETSSVETV</sequence>